<comment type="function">
    <text evidence="1">RNaseP catalyzes the removal of the 5'-leader sequence from pre-tRNA to produce the mature 5'-terminus. It can also cleave other RNA substrates such as 4.5S RNA. The protein component plays an auxiliary but essential role in vivo by binding to the 5'-leader sequence and broadening the substrate specificity of the ribozyme.</text>
</comment>
<comment type="catalytic activity">
    <reaction evidence="1">
        <text>Endonucleolytic cleavage of RNA, removing 5'-extranucleotides from tRNA precursor.</text>
        <dbReference type="EC" id="3.1.26.5"/>
    </reaction>
</comment>
<comment type="subunit">
    <text evidence="1">Consists of a catalytic RNA component (M1 or rnpB) and a protein subunit.</text>
</comment>
<comment type="similarity">
    <text evidence="1">Belongs to the RnpA family.</text>
</comment>
<organism>
    <name type="scientific">Geobacillus kaustophilus (strain HTA426)</name>
    <dbReference type="NCBI Taxonomy" id="235909"/>
    <lineage>
        <taxon>Bacteria</taxon>
        <taxon>Bacillati</taxon>
        <taxon>Bacillota</taxon>
        <taxon>Bacilli</taxon>
        <taxon>Bacillales</taxon>
        <taxon>Anoxybacillaceae</taxon>
        <taxon>Geobacillus</taxon>
        <taxon>Geobacillus thermoleovorans group</taxon>
    </lineage>
</organism>
<accession>Q5KU54</accession>
<feature type="chain" id="PRO_0000198464" description="Ribonuclease P protein component">
    <location>
        <begin position="1"/>
        <end position="121"/>
    </location>
</feature>
<reference key="1">
    <citation type="journal article" date="2004" name="Nucleic Acids Res.">
        <title>Thermoadaptation trait revealed by the genome sequence of thermophilic Geobacillus kaustophilus.</title>
        <authorList>
            <person name="Takami H."/>
            <person name="Takaki Y."/>
            <person name="Chee G.-J."/>
            <person name="Nishi S."/>
            <person name="Shimamura S."/>
            <person name="Suzuki H."/>
            <person name="Matsui S."/>
            <person name="Uchiyama I."/>
        </authorList>
    </citation>
    <scope>NUCLEOTIDE SEQUENCE [LARGE SCALE GENOMIC DNA]</scope>
    <source>
        <strain>HTA426</strain>
    </source>
</reference>
<sequence>MKKKYRIKKNEEFQEVFQRGASTANRQFVIYTLDRPEQPYFRIGLSVSKKLGKAVVRNRIKRYIRQCFLELKEEIAPGKDYVVIARQPVAEMNYAEVKKSLIHVLRKSGGLKKGGQPSHSA</sequence>
<dbReference type="EC" id="3.1.26.5" evidence="1"/>
<dbReference type="EMBL" id="BA000043">
    <property type="protein sequence ID" value="BAD77782.1"/>
    <property type="molecule type" value="Genomic_DNA"/>
</dbReference>
<dbReference type="RefSeq" id="WP_011232960.1">
    <property type="nucleotide sequence ID" value="NC_006510.1"/>
</dbReference>
<dbReference type="SMR" id="Q5KU54"/>
<dbReference type="STRING" id="235909.GK3497"/>
<dbReference type="GeneID" id="32065375"/>
<dbReference type="KEGG" id="gka:GK3497"/>
<dbReference type="eggNOG" id="COG0594">
    <property type="taxonomic scope" value="Bacteria"/>
</dbReference>
<dbReference type="HOGENOM" id="CLU_117179_9_1_9"/>
<dbReference type="Proteomes" id="UP000001172">
    <property type="component" value="Chromosome"/>
</dbReference>
<dbReference type="GO" id="GO:0030677">
    <property type="term" value="C:ribonuclease P complex"/>
    <property type="evidence" value="ECO:0007669"/>
    <property type="project" value="TreeGrafter"/>
</dbReference>
<dbReference type="GO" id="GO:0042781">
    <property type="term" value="F:3'-tRNA processing endoribonuclease activity"/>
    <property type="evidence" value="ECO:0007669"/>
    <property type="project" value="TreeGrafter"/>
</dbReference>
<dbReference type="GO" id="GO:0004526">
    <property type="term" value="F:ribonuclease P activity"/>
    <property type="evidence" value="ECO:0007669"/>
    <property type="project" value="UniProtKB-UniRule"/>
</dbReference>
<dbReference type="GO" id="GO:0000049">
    <property type="term" value="F:tRNA binding"/>
    <property type="evidence" value="ECO:0007669"/>
    <property type="project" value="UniProtKB-UniRule"/>
</dbReference>
<dbReference type="GO" id="GO:0001682">
    <property type="term" value="P:tRNA 5'-leader removal"/>
    <property type="evidence" value="ECO:0007669"/>
    <property type="project" value="UniProtKB-UniRule"/>
</dbReference>
<dbReference type="FunFam" id="3.30.230.10:FF:000021">
    <property type="entry name" value="Ribonuclease P protein component"/>
    <property type="match status" value="1"/>
</dbReference>
<dbReference type="Gene3D" id="3.30.230.10">
    <property type="match status" value="1"/>
</dbReference>
<dbReference type="HAMAP" id="MF_00227">
    <property type="entry name" value="RNase_P"/>
    <property type="match status" value="1"/>
</dbReference>
<dbReference type="InterPro" id="IPR020568">
    <property type="entry name" value="Ribosomal_Su5_D2-typ_SF"/>
</dbReference>
<dbReference type="InterPro" id="IPR014721">
    <property type="entry name" value="Ribsml_uS5_D2-typ_fold_subgr"/>
</dbReference>
<dbReference type="InterPro" id="IPR000100">
    <property type="entry name" value="RNase_P"/>
</dbReference>
<dbReference type="InterPro" id="IPR020539">
    <property type="entry name" value="RNase_P_CS"/>
</dbReference>
<dbReference type="NCBIfam" id="TIGR00188">
    <property type="entry name" value="rnpA"/>
    <property type="match status" value="1"/>
</dbReference>
<dbReference type="PANTHER" id="PTHR33992">
    <property type="entry name" value="RIBONUCLEASE P PROTEIN COMPONENT"/>
    <property type="match status" value="1"/>
</dbReference>
<dbReference type="PANTHER" id="PTHR33992:SF1">
    <property type="entry name" value="RIBONUCLEASE P PROTEIN COMPONENT"/>
    <property type="match status" value="1"/>
</dbReference>
<dbReference type="Pfam" id="PF00825">
    <property type="entry name" value="Ribonuclease_P"/>
    <property type="match status" value="1"/>
</dbReference>
<dbReference type="SUPFAM" id="SSF54211">
    <property type="entry name" value="Ribosomal protein S5 domain 2-like"/>
    <property type="match status" value="1"/>
</dbReference>
<dbReference type="PROSITE" id="PS00648">
    <property type="entry name" value="RIBONUCLEASE_P"/>
    <property type="match status" value="1"/>
</dbReference>
<keyword id="KW-0255">Endonuclease</keyword>
<keyword id="KW-0378">Hydrolase</keyword>
<keyword id="KW-0540">Nuclease</keyword>
<keyword id="KW-1185">Reference proteome</keyword>
<keyword id="KW-0694">RNA-binding</keyword>
<keyword id="KW-0819">tRNA processing</keyword>
<evidence type="ECO:0000255" key="1">
    <source>
        <dbReference type="HAMAP-Rule" id="MF_00227"/>
    </source>
</evidence>
<name>RNPA_GEOKA</name>
<gene>
    <name evidence="1" type="primary">rnpA</name>
    <name type="ordered locus">GK3497</name>
</gene>
<protein>
    <recommendedName>
        <fullName evidence="1">Ribonuclease P protein component</fullName>
        <shortName evidence="1">RNase P protein</shortName>
        <shortName evidence="1">RNaseP protein</shortName>
        <ecNumber evidence="1">3.1.26.5</ecNumber>
    </recommendedName>
    <alternativeName>
        <fullName evidence="1">Protein C5</fullName>
    </alternativeName>
</protein>
<proteinExistence type="inferred from homology"/>